<reference key="1">
    <citation type="journal article" date="2002" name="J. Bacteriol.">
        <title>Whole-genome comparison of Mycobacterium tuberculosis clinical and laboratory strains.</title>
        <authorList>
            <person name="Fleischmann R.D."/>
            <person name="Alland D."/>
            <person name="Eisen J.A."/>
            <person name="Carpenter L."/>
            <person name="White O."/>
            <person name="Peterson J.D."/>
            <person name="DeBoy R.T."/>
            <person name="Dodson R.J."/>
            <person name="Gwinn M.L."/>
            <person name="Haft D.H."/>
            <person name="Hickey E.K."/>
            <person name="Kolonay J.F."/>
            <person name="Nelson W.C."/>
            <person name="Umayam L.A."/>
            <person name="Ermolaeva M.D."/>
            <person name="Salzberg S.L."/>
            <person name="Delcher A."/>
            <person name="Utterback T.R."/>
            <person name="Weidman J.F."/>
            <person name="Khouri H.M."/>
            <person name="Gill J."/>
            <person name="Mikula A."/>
            <person name="Bishai W."/>
            <person name="Jacobs W.R. Jr."/>
            <person name="Venter J.C."/>
            <person name="Fraser C.M."/>
        </authorList>
    </citation>
    <scope>NUCLEOTIDE SEQUENCE [LARGE SCALE GENOMIC DNA]</scope>
    <source>
        <strain>CDC 1551 / Oshkosh</strain>
    </source>
</reference>
<evidence type="ECO:0000255" key="1">
    <source>
        <dbReference type="HAMAP-Rule" id="MF_01331"/>
    </source>
</evidence>
<evidence type="ECO:0000256" key="2">
    <source>
        <dbReference type="SAM" id="MobiDB-lite"/>
    </source>
</evidence>
<evidence type="ECO:0000305" key="3"/>
<name>RL22_MYCTO</name>
<proteinExistence type="inferred from homology"/>
<dbReference type="EMBL" id="AE000516">
    <property type="protein sequence ID" value="AAK44964.1"/>
    <property type="molecule type" value="Genomic_DNA"/>
</dbReference>
<dbReference type="PIR" id="E70642">
    <property type="entry name" value="E70642"/>
</dbReference>
<dbReference type="RefSeq" id="WP_003403587.1">
    <property type="nucleotide sequence ID" value="NZ_KK341227.1"/>
</dbReference>
<dbReference type="SMR" id="P9WHC0"/>
<dbReference type="KEGG" id="mtc:MT0733"/>
<dbReference type="PATRIC" id="fig|83331.31.peg.783"/>
<dbReference type="HOGENOM" id="CLU_083987_1_0_11"/>
<dbReference type="Proteomes" id="UP000001020">
    <property type="component" value="Chromosome"/>
</dbReference>
<dbReference type="GO" id="GO:0022625">
    <property type="term" value="C:cytosolic large ribosomal subunit"/>
    <property type="evidence" value="ECO:0007669"/>
    <property type="project" value="TreeGrafter"/>
</dbReference>
<dbReference type="GO" id="GO:0019843">
    <property type="term" value="F:rRNA binding"/>
    <property type="evidence" value="ECO:0007669"/>
    <property type="project" value="UniProtKB-UniRule"/>
</dbReference>
<dbReference type="GO" id="GO:0003735">
    <property type="term" value="F:structural constituent of ribosome"/>
    <property type="evidence" value="ECO:0007669"/>
    <property type="project" value="InterPro"/>
</dbReference>
<dbReference type="GO" id="GO:0006412">
    <property type="term" value="P:translation"/>
    <property type="evidence" value="ECO:0007669"/>
    <property type="project" value="UniProtKB-UniRule"/>
</dbReference>
<dbReference type="CDD" id="cd00336">
    <property type="entry name" value="Ribosomal_L22"/>
    <property type="match status" value="1"/>
</dbReference>
<dbReference type="FunFam" id="3.90.470.10:FF:000002">
    <property type="entry name" value="50S ribosomal protein L22"/>
    <property type="match status" value="1"/>
</dbReference>
<dbReference type="Gene3D" id="3.90.470.10">
    <property type="entry name" value="Ribosomal protein L22/L17"/>
    <property type="match status" value="1"/>
</dbReference>
<dbReference type="HAMAP" id="MF_01331_B">
    <property type="entry name" value="Ribosomal_uL22_B"/>
    <property type="match status" value="1"/>
</dbReference>
<dbReference type="InterPro" id="IPR001063">
    <property type="entry name" value="Ribosomal_uL22"/>
</dbReference>
<dbReference type="InterPro" id="IPR005727">
    <property type="entry name" value="Ribosomal_uL22_bac/chlpt-type"/>
</dbReference>
<dbReference type="InterPro" id="IPR047867">
    <property type="entry name" value="Ribosomal_uL22_bac/org-type"/>
</dbReference>
<dbReference type="InterPro" id="IPR018260">
    <property type="entry name" value="Ribosomal_uL22_CS"/>
</dbReference>
<dbReference type="InterPro" id="IPR036394">
    <property type="entry name" value="Ribosomal_uL22_sf"/>
</dbReference>
<dbReference type="NCBIfam" id="TIGR01044">
    <property type="entry name" value="rplV_bact"/>
    <property type="match status" value="1"/>
</dbReference>
<dbReference type="PANTHER" id="PTHR13501">
    <property type="entry name" value="CHLOROPLAST 50S RIBOSOMAL PROTEIN L22-RELATED"/>
    <property type="match status" value="1"/>
</dbReference>
<dbReference type="PANTHER" id="PTHR13501:SF8">
    <property type="entry name" value="LARGE RIBOSOMAL SUBUNIT PROTEIN UL22M"/>
    <property type="match status" value="1"/>
</dbReference>
<dbReference type="Pfam" id="PF00237">
    <property type="entry name" value="Ribosomal_L22"/>
    <property type="match status" value="1"/>
</dbReference>
<dbReference type="SUPFAM" id="SSF54843">
    <property type="entry name" value="Ribosomal protein L22"/>
    <property type="match status" value="1"/>
</dbReference>
<dbReference type="PROSITE" id="PS00464">
    <property type="entry name" value="RIBOSOMAL_L22"/>
    <property type="match status" value="1"/>
</dbReference>
<protein>
    <recommendedName>
        <fullName evidence="1">Large ribosomal subunit protein uL22</fullName>
    </recommendedName>
    <alternativeName>
        <fullName evidence="3">50S ribosomal protein L22</fullName>
    </alternativeName>
</protein>
<accession>P9WHC0</accession>
<accession>L0T4G9</accession>
<accession>O08119</accession>
<accession>P61181</accession>
<accession>P95054</accession>
<comment type="function">
    <text evidence="1">This protein binds specifically to 23S rRNA; its binding is stimulated by other ribosomal proteins, e.g. L4, L17, and L20. It is important during the early stages of 50S assembly. It makes multiple contacts with different domains of the 23S rRNA in the assembled 50S subunit and ribosome (By similarity).</text>
</comment>
<comment type="function">
    <text evidence="1">The globular domain of the protein is located near the polypeptide exit tunnel on the outside of the subunit, while an extended beta-hairpin is found that lines the wall of the exit tunnel in the center of the 70S ribosome.</text>
</comment>
<comment type="subunit">
    <text evidence="1">Part of the 50S ribosomal subunit.</text>
</comment>
<comment type="similarity">
    <text evidence="1">Belongs to the universal ribosomal protein uL22 family.</text>
</comment>
<gene>
    <name evidence="1" type="primary">rplV</name>
    <name type="ordered locus">MT0733</name>
</gene>
<sequence length="197" mass="20380">MTAATKATEYPSAVAKARFVRVSPRKARRVIDLVRGRSVSDALDILRWAPQAASGPVAKVIASAAANAQNNGGLDPATLVVATVYADQGPTAKRIRPRAQGRAFRIRRRTSHITVVVESRPAKDQRSAKSSRARRTEASKAASKVGATAPAKKAAAKAPAKKAPASSGVKKTPAKKAPAKKAPAKASETSAAKGGSD</sequence>
<feature type="chain" id="PRO_0000428213" description="Large ribosomal subunit protein uL22">
    <location>
        <begin position="1"/>
        <end position="197"/>
    </location>
</feature>
<feature type="region of interest" description="Disordered" evidence="2">
    <location>
        <begin position="118"/>
        <end position="197"/>
    </location>
</feature>
<feature type="compositionally biased region" description="Low complexity" evidence="2">
    <location>
        <begin position="149"/>
        <end position="165"/>
    </location>
</feature>
<feature type="compositionally biased region" description="Basic residues" evidence="2">
    <location>
        <begin position="172"/>
        <end position="183"/>
    </location>
</feature>
<feature type="compositionally biased region" description="Low complexity" evidence="2">
    <location>
        <begin position="184"/>
        <end position="197"/>
    </location>
</feature>
<keyword id="KW-1185">Reference proteome</keyword>
<keyword id="KW-0687">Ribonucleoprotein</keyword>
<keyword id="KW-0689">Ribosomal protein</keyword>
<keyword id="KW-0694">RNA-binding</keyword>
<keyword id="KW-0699">rRNA-binding</keyword>
<organism>
    <name type="scientific">Mycobacterium tuberculosis (strain CDC 1551 / Oshkosh)</name>
    <dbReference type="NCBI Taxonomy" id="83331"/>
    <lineage>
        <taxon>Bacteria</taxon>
        <taxon>Bacillati</taxon>
        <taxon>Actinomycetota</taxon>
        <taxon>Actinomycetes</taxon>
        <taxon>Mycobacteriales</taxon>
        <taxon>Mycobacteriaceae</taxon>
        <taxon>Mycobacterium</taxon>
        <taxon>Mycobacterium tuberculosis complex</taxon>
    </lineage>
</organism>